<keyword id="KW-0030">Aminoacyl-tRNA synthetase</keyword>
<keyword id="KW-0067">ATP-binding</keyword>
<keyword id="KW-0963">Cytoplasm</keyword>
<keyword id="KW-0436">Ligase</keyword>
<keyword id="KW-0460">Magnesium</keyword>
<keyword id="KW-0479">Metal-binding</keyword>
<keyword id="KW-0547">Nucleotide-binding</keyword>
<keyword id="KW-0648">Protein biosynthesis</keyword>
<keyword id="KW-1185">Reference proteome</keyword>
<sequence>MSEELGLNDLLAVRREKLQNLEAEGANPFGGKFERTDTAQSMKEKYDAKSKEELEEETHEVVLAGRVMTKRGKGKAGFAHIQDLTGQIQIYVRKDAVGDKSYDLFTSIDIGDIVGVKGVAFKTKVGELSVKVQDFQLLTKSLRPLPDKYHGLKDVEQRYRQRYLDLIVNPEVRDTFVLRSKILQSMRRYLDDRGYLEVETPTMHSIPGGASARPFVTHHNALDMTLYMRIAIELHLKRLIVGGMEKVYEIGRVFRNEGVSTRHNPEFTMIELYEAYADYNDIMELTELLIAHIAKDVLGTTTITYGEHEVNLEPKWRRVHMVEAIKEETGVDFWNEMSDEEARALAKEHNVPVKETMTYGHVVNEFFEHFVEEKLIQPTFVYGHPVAISPLAKKNPDDPRFTDRFELFIVGREHANAFSELNDPIDQRHRFEQQLVEREQGDDEAHMMDEDFVESLEYGMPPTGGLGIGIDRLVMLLTNSPSIRDVLLFPQMRHKDSPATE</sequence>
<organism>
    <name type="scientific">Halalkalibacterium halodurans (strain ATCC BAA-125 / DSM 18197 / FERM 7344 / JCM 9153 / C-125)</name>
    <name type="common">Bacillus halodurans</name>
    <dbReference type="NCBI Taxonomy" id="272558"/>
    <lineage>
        <taxon>Bacteria</taxon>
        <taxon>Bacillati</taxon>
        <taxon>Bacillota</taxon>
        <taxon>Bacilli</taxon>
        <taxon>Bacillales</taxon>
        <taxon>Bacillaceae</taxon>
        <taxon>Halalkalibacterium (ex Joshi et al. 2022)</taxon>
    </lineage>
</organism>
<evidence type="ECO:0000250" key="1"/>
<evidence type="ECO:0000305" key="2"/>
<proteinExistence type="inferred from homology"/>
<gene>
    <name type="primary">lysS</name>
    <name type="ordered locus">BH0098</name>
</gene>
<dbReference type="EC" id="6.1.1.6"/>
<dbReference type="EMBL" id="BA000004">
    <property type="protein sequence ID" value="BAB03817.1"/>
    <property type="molecule type" value="Genomic_DNA"/>
</dbReference>
<dbReference type="PIR" id="B83662">
    <property type="entry name" value="B83662"/>
</dbReference>
<dbReference type="RefSeq" id="WP_010896282.1">
    <property type="nucleotide sequence ID" value="NC_002570.2"/>
</dbReference>
<dbReference type="SMR" id="Q9KGG4"/>
<dbReference type="STRING" id="272558.gene:10725921"/>
<dbReference type="KEGG" id="bha:BH0098"/>
<dbReference type="eggNOG" id="COG1190">
    <property type="taxonomic scope" value="Bacteria"/>
</dbReference>
<dbReference type="HOGENOM" id="CLU_008255_6_0_9"/>
<dbReference type="OrthoDB" id="9801152at2"/>
<dbReference type="Proteomes" id="UP000001258">
    <property type="component" value="Chromosome"/>
</dbReference>
<dbReference type="GO" id="GO:0005829">
    <property type="term" value="C:cytosol"/>
    <property type="evidence" value="ECO:0007669"/>
    <property type="project" value="TreeGrafter"/>
</dbReference>
<dbReference type="GO" id="GO:0005524">
    <property type="term" value="F:ATP binding"/>
    <property type="evidence" value="ECO:0007669"/>
    <property type="project" value="UniProtKB-UniRule"/>
</dbReference>
<dbReference type="GO" id="GO:0140096">
    <property type="term" value="F:catalytic activity, acting on a protein"/>
    <property type="evidence" value="ECO:0007669"/>
    <property type="project" value="UniProtKB-ARBA"/>
</dbReference>
<dbReference type="GO" id="GO:0004824">
    <property type="term" value="F:lysine-tRNA ligase activity"/>
    <property type="evidence" value="ECO:0007669"/>
    <property type="project" value="UniProtKB-UniRule"/>
</dbReference>
<dbReference type="GO" id="GO:0000287">
    <property type="term" value="F:magnesium ion binding"/>
    <property type="evidence" value="ECO:0007669"/>
    <property type="project" value="UniProtKB-UniRule"/>
</dbReference>
<dbReference type="GO" id="GO:0016740">
    <property type="term" value="F:transferase activity"/>
    <property type="evidence" value="ECO:0007669"/>
    <property type="project" value="UniProtKB-ARBA"/>
</dbReference>
<dbReference type="GO" id="GO:0000049">
    <property type="term" value="F:tRNA binding"/>
    <property type="evidence" value="ECO:0007669"/>
    <property type="project" value="TreeGrafter"/>
</dbReference>
<dbReference type="GO" id="GO:0006430">
    <property type="term" value="P:lysyl-tRNA aminoacylation"/>
    <property type="evidence" value="ECO:0007669"/>
    <property type="project" value="UniProtKB-UniRule"/>
</dbReference>
<dbReference type="CDD" id="cd00775">
    <property type="entry name" value="LysRS_core"/>
    <property type="match status" value="1"/>
</dbReference>
<dbReference type="CDD" id="cd04322">
    <property type="entry name" value="LysRS_N"/>
    <property type="match status" value="1"/>
</dbReference>
<dbReference type="FunFam" id="2.40.50.140:FF:000024">
    <property type="entry name" value="Lysine--tRNA ligase"/>
    <property type="match status" value="1"/>
</dbReference>
<dbReference type="FunFam" id="3.30.930.10:FF:000001">
    <property type="entry name" value="Lysine--tRNA ligase"/>
    <property type="match status" value="1"/>
</dbReference>
<dbReference type="Gene3D" id="3.30.930.10">
    <property type="entry name" value="Bira Bifunctional Protein, Domain 2"/>
    <property type="match status" value="1"/>
</dbReference>
<dbReference type="Gene3D" id="2.40.50.140">
    <property type="entry name" value="Nucleic acid-binding proteins"/>
    <property type="match status" value="1"/>
</dbReference>
<dbReference type="HAMAP" id="MF_00252">
    <property type="entry name" value="Lys_tRNA_synth_class2"/>
    <property type="match status" value="1"/>
</dbReference>
<dbReference type="InterPro" id="IPR004364">
    <property type="entry name" value="Aa-tRNA-synt_II"/>
</dbReference>
<dbReference type="InterPro" id="IPR006195">
    <property type="entry name" value="aa-tRNA-synth_II"/>
</dbReference>
<dbReference type="InterPro" id="IPR045864">
    <property type="entry name" value="aa-tRNA-synth_II/BPL/LPL"/>
</dbReference>
<dbReference type="InterPro" id="IPR002313">
    <property type="entry name" value="Lys-tRNA-ligase_II"/>
</dbReference>
<dbReference type="InterPro" id="IPR034762">
    <property type="entry name" value="Lys-tRNA-ligase_II_bac/euk"/>
</dbReference>
<dbReference type="InterPro" id="IPR044136">
    <property type="entry name" value="Lys-tRNA-ligase_II_N"/>
</dbReference>
<dbReference type="InterPro" id="IPR018149">
    <property type="entry name" value="Lys-tRNA-synth_II_C"/>
</dbReference>
<dbReference type="InterPro" id="IPR012340">
    <property type="entry name" value="NA-bd_OB-fold"/>
</dbReference>
<dbReference type="InterPro" id="IPR004365">
    <property type="entry name" value="NA-bd_OB_tRNA"/>
</dbReference>
<dbReference type="NCBIfam" id="TIGR00499">
    <property type="entry name" value="lysS_bact"/>
    <property type="match status" value="1"/>
</dbReference>
<dbReference type="NCBIfam" id="NF001756">
    <property type="entry name" value="PRK00484.1"/>
    <property type="match status" value="1"/>
</dbReference>
<dbReference type="PANTHER" id="PTHR42918:SF15">
    <property type="entry name" value="LYSINE--TRNA LIGASE, CHLOROPLASTIC_MITOCHONDRIAL"/>
    <property type="match status" value="1"/>
</dbReference>
<dbReference type="PANTHER" id="PTHR42918">
    <property type="entry name" value="LYSYL-TRNA SYNTHETASE"/>
    <property type="match status" value="1"/>
</dbReference>
<dbReference type="Pfam" id="PF00152">
    <property type="entry name" value="tRNA-synt_2"/>
    <property type="match status" value="1"/>
</dbReference>
<dbReference type="Pfam" id="PF01336">
    <property type="entry name" value="tRNA_anti-codon"/>
    <property type="match status" value="1"/>
</dbReference>
<dbReference type="PIRSF" id="PIRSF039101">
    <property type="entry name" value="LysRS2"/>
    <property type="match status" value="1"/>
</dbReference>
<dbReference type="PRINTS" id="PR00982">
    <property type="entry name" value="TRNASYNTHLYS"/>
</dbReference>
<dbReference type="SUPFAM" id="SSF55681">
    <property type="entry name" value="Class II aaRS and biotin synthetases"/>
    <property type="match status" value="1"/>
</dbReference>
<dbReference type="SUPFAM" id="SSF50249">
    <property type="entry name" value="Nucleic acid-binding proteins"/>
    <property type="match status" value="1"/>
</dbReference>
<dbReference type="PROSITE" id="PS50862">
    <property type="entry name" value="AA_TRNA_LIGASE_II"/>
    <property type="match status" value="1"/>
</dbReference>
<accession>Q9KGG4</accession>
<reference key="1">
    <citation type="journal article" date="2000" name="Nucleic Acids Res.">
        <title>Complete genome sequence of the alkaliphilic bacterium Bacillus halodurans and genomic sequence comparison with Bacillus subtilis.</title>
        <authorList>
            <person name="Takami H."/>
            <person name="Nakasone K."/>
            <person name="Takaki Y."/>
            <person name="Maeno G."/>
            <person name="Sasaki R."/>
            <person name="Masui N."/>
            <person name="Fuji F."/>
            <person name="Hirama C."/>
            <person name="Nakamura Y."/>
            <person name="Ogasawara N."/>
            <person name="Kuhara S."/>
            <person name="Horikoshi K."/>
        </authorList>
    </citation>
    <scope>NUCLEOTIDE SEQUENCE [LARGE SCALE GENOMIC DNA]</scope>
    <source>
        <strain>ATCC BAA-125 / DSM 18197 / FERM 7344 / JCM 9153 / C-125</strain>
    </source>
</reference>
<protein>
    <recommendedName>
        <fullName>Lysine--tRNA ligase</fullName>
        <ecNumber>6.1.1.6</ecNumber>
    </recommendedName>
    <alternativeName>
        <fullName>Lysyl-tRNA synthetase</fullName>
        <shortName>LysRS</shortName>
    </alternativeName>
</protein>
<name>SYK_HALH5</name>
<comment type="catalytic activity">
    <reaction>
        <text>tRNA(Lys) + L-lysine + ATP = L-lysyl-tRNA(Lys) + AMP + diphosphate</text>
        <dbReference type="Rhea" id="RHEA:20792"/>
        <dbReference type="Rhea" id="RHEA-COMP:9696"/>
        <dbReference type="Rhea" id="RHEA-COMP:9697"/>
        <dbReference type="ChEBI" id="CHEBI:30616"/>
        <dbReference type="ChEBI" id="CHEBI:32551"/>
        <dbReference type="ChEBI" id="CHEBI:33019"/>
        <dbReference type="ChEBI" id="CHEBI:78442"/>
        <dbReference type="ChEBI" id="CHEBI:78529"/>
        <dbReference type="ChEBI" id="CHEBI:456215"/>
        <dbReference type="EC" id="6.1.1.6"/>
    </reaction>
</comment>
<comment type="cofactor">
    <cofactor evidence="1">
        <name>Mg(2+)</name>
        <dbReference type="ChEBI" id="CHEBI:18420"/>
    </cofactor>
    <text evidence="1">Binds 3 Mg(2+) ions per subunit.</text>
</comment>
<comment type="subunit">
    <text evidence="1">Homodimer.</text>
</comment>
<comment type="subcellular location">
    <subcellularLocation>
        <location evidence="1">Cytoplasm</location>
    </subcellularLocation>
</comment>
<comment type="similarity">
    <text evidence="2">Belongs to the class-II aminoacyl-tRNA synthetase family.</text>
</comment>
<feature type="chain" id="PRO_0000152598" description="Lysine--tRNA ligase">
    <location>
        <begin position="1"/>
        <end position="501"/>
    </location>
</feature>
<feature type="binding site" evidence="1">
    <location>
        <position position="406"/>
    </location>
    <ligand>
        <name>Mg(2+)</name>
        <dbReference type="ChEBI" id="CHEBI:18420"/>
        <label>1</label>
    </ligand>
</feature>
<feature type="binding site" evidence="1">
    <location>
        <position position="413"/>
    </location>
    <ligand>
        <name>Mg(2+)</name>
        <dbReference type="ChEBI" id="CHEBI:18420"/>
        <label>1</label>
    </ligand>
</feature>
<feature type="binding site" evidence="1">
    <location>
        <position position="413"/>
    </location>
    <ligand>
        <name>Mg(2+)</name>
        <dbReference type="ChEBI" id="CHEBI:18420"/>
        <label>2</label>
    </ligand>
</feature>